<comment type="function">
    <text evidence="3 7 8">Alpha2 catalytic subunit of the cytosolic type I platelet-activating factor (PAF) acetylhydrolase (PAF-AH (I)) heterotetrameric enzyme that catalyzes the hydrolyze of the acetyl group at the sn-2 position of PAF and its analogs and modulates the action of PAF (PubMed:9660828). The activity and substrate specificity of PAF-AH (I) are affected by its subunit composition. The alpha2/alpha2 homodimer (PAFAH1B2/PAFAH1B2 homodimer) hydrolyzes PAF and 1-O-alkyl-2-acetyl-sn-glycero-3-phosphorylethanolamine (AAGPE) more efficiently than 1-O-alkyl-2-acetyl-sn-glycero-3-phosphoric acid (AAGPA). In contrast, the alpha1/alpha2 heterodimer(PAFAH1B3/PAFAH1B3 heterodimer) hydrolyzes AAGPA more efficiently than PAF, but has little hydrolytic activity towards AAGPE (By similarity). May play a role in male germ cell meiosis during the late pachytenestage and meiotic divisions as well as early spermiogenesis (By similarity).</text>
</comment>
<comment type="catalytic activity">
    <reaction evidence="8">
        <text>a 1-O-alkyl-2-acetyl-sn-glycero-3-phosphocholine + H2O = a 1-O-alkyl-sn-glycero-3-phosphocholine + acetate + H(+)</text>
        <dbReference type="Rhea" id="RHEA:17777"/>
        <dbReference type="ChEBI" id="CHEBI:15377"/>
        <dbReference type="ChEBI" id="CHEBI:15378"/>
        <dbReference type="ChEBI" id="CHEBI:30089"/>
        <dbReference type="ChEBI" id="CHEBI:30909"/>
        <dbReference type="ChEBI" id="CHEBI:36707"/>
        <dbReference type="EC" id="3.1.1.47"/>
    </reaction>
    <physiologicalReaction direction="left-to-right" evidence="10">
        <dbReference type="Rhea" id="RHEA:17778"/>
    </physiologicalReaction>
</comment>
<comment type="catalytic activity">
    <reaction evidence="8">
        <text>1-O-hexadecyl-2-acetyl-sn-glycero-3-phosphocholine + H2O = 1-O-hexadecyl-sn-glycero-3-phosphocholine + acetate + H(+)</text>
        <dbReference type="Rhea" id="RHEA:40479"/>
        <dbReference type="ChEBI" id="CHEBI:15377"/>
        <dbReference type="ChEBI" id="CHEBI:15378"/>
        <dbReference type="ChEBI" id="CHEBI:30089"/>
        <dbReference type="ChEBI" id="CHEBI:44811"/>
        <dbReference type="ChEBI" id="CHEBI:64496"/>
    </reaction>
    <physiologicalReaction direction="left-to-right" evidence="10">
        <dbReference type="Rhea" id="RHEA:40480"/>
    </physiologicalReaction>
</comment>
<comment type="catalytic activity">
    <reaction evidence="3">
        <text>1-O-hexadecyl-2-acetyl-sn-glycero-3-phosphate + H2O = 1-O-hexadecyl-sn-glycero-3-phosphate + acetate + H(+)</text>
        <dbReference type="Rhea" id="RHEA:41704"/>
        <dbReference type="ChEBI" id="CHEBI:15377"/>
        <dbReference type="ChEBI" id="CHEBI:15378"/>
        <dbReference type="ChEBI" id="CHEBI:30089"/>
        <dbReference type="ChEBI" id="CHEBI:77580"/>
        <dbReference type="ChEBI" id="CHEBI:78385"/>
    </reaction>
    <physiologicalReaction direction="left-to-right" evidence="3">
        <dbReference type="Rhea" id="RHEA:41705"/>
    </physiologicalReaction>
</comment>
<comment type="catalytic activity">
    <reaction evidence="3">
        <text>1-O-hexadecyl-2-acetyl-sn-glycero-3-phosphoethanolamine + H2O = 1-O-hexadecyl-sn-glycero-3-phosphoethanolamine + acetate + H(+)</text>
        <dbReference type="Rhea" id="RHEA:41708"/>
        <dbReference type="ChEBI" id="CHEBI:15377"/>
        <dbReference type="ChEBI" id="CHEBI:15378"/>
        <dbReference type="ChEBI" id="CHEBI:30089"/>
        <dbReference type="ChEBI" id="CHEBI:78387"/>
        <dbReference type="ChEBI" id="CHEBI:78390"/>
    </reaction>
    <physiologicalReaction direction="left-to-right" evidence="3">
        <dbReference type="Rhea" id="RHEA:41709"/>
    </physiologicalReaction>
</comment>
<comment type="activity regulation">
    <text evidence="3">Beta subunit (PAFAH1B1) stimulates the acetylhydrolase activity of the alpha2/alpha2 catalytic homodimer.</text>
</comment>
<comment type="subunit">
    <text evidence="3 4 7 8">Forms a catalytic dimer which is either homodimer (alpha2/alpha2 homodimer) or heterodimer with PAFAH1B3 (alpha2/alpha1 heterodimer) (PubMed:9660828). Component of the cytosolic (PAF-AH (I)) heterotetrameric enzyme, which is composed of PAFAH1B1 (beta), PAFAH1B2 (alpha2) and PAFAH1B3 (alpha1) subunits (PubMed:9660828). The catalytic activity of the enzyme resides in the alpha1 (PAFAH1B3) and alpha2 (PAFAH1B2) subunits, whereas the beta subunit (PAFAH1B1) has regulatory activity. Trimer formation is not essential for the catalytic activity (By similarity). Interacts (homodimer form) with PAFAH1B1 (homodimer form); PAFAH1B2 competes with NDEL1 for PAFAH1B1 binding (By similarity). Interacts with VLDLR; this interaction may modulate the Reelin pathway (By similarity).</text>
</comment>
<comment type="interaction">
    <interactant intactId="EBI-915500">
        <id>O35264</id>
    </interactant>
    <interactant intactId="EBI-1007886">
        <id>P43033</id>
        <label>PAFAH1B1</label>
    </interactant>
    <organismsDiffer>true</organismsDiffer>
    <experiments>2</experiments>
</comment>
<comment type="subcellular location">
    <subcellularLocation>
        <location evidence="1">Cytoplasm</location>
    </subcellularLocation>
</comment>
<comment type="tissue specificity">
    <text evidence="8">Expressed in heart, brain, spleen, lung, liver, kidney and testis. Not expressed in skeletal muscle. Expressed in fetal as heterodimer and adult brain as homodimer. In neural cells, expressed in granule cells, astroglial cells, and oligodendrocytes (PubMed:9660828).</text>
</comment>
<comment type="developmental stage">
    <text evidence="8">During the embryonic stages, high expressed in the brain, spinal cord, sensory ganglia (dorsal root and trigeminal ganglia), and thymus. In brain found throughout the ventricular and marginal zones.</text>
</comment>
<comment type="miscellaneous">
    <text evidence="2 4 5 6">Originally the subunits of the type I platelet-activating factor (PAF) acetylhydrolase was named alpha (PAFAH1B1), beta (PAFAH1B2) and gamma (PAFAH1B3) (By similarity). Now these subunits have been renamed beta (PAFAH1B1), alpha2 (PAFAH1B2) and alpha1 (PAFAH1B3) respectively (By similarity).</text>
</comment>
<comment type="similarity">
    <text evidence="9">Belongs to the 'GDSL' lipolytic enzyme family. Platelet-activating factor acetylhydrolase IB beta/gamma subunits subfamily.</text>
</comment>
<organism>
    <name type="scientific">Rattus norvegicus</name>
    <name type="common">Rat</name>
    <dbReference type="NCBI Taxonomy" id="10116"/>
    <lineage>
        <taxon>Eukaryota</taxon>
        <taxon>Metazoa</taxon>
        <taxon>Chordata</taxon>
        <taxon>Craniata</taxon>
        <taxon>Vertebrata</taxon>
        <taxon>Euteleostomi</taxon>
        <taxon>Mammalia</taxon>
        <taxon>Eutheria</taxon>
        <taxon>Euarchontoglires</taxon>
        <taxon>Glires</taxon>
        <taxon>Rodentia</taxon>
        <taxon>Myomorpha</taxon>
        <taxon>Muroidea</taxon>
        <taxon>Muridae</taxon>
        <taxon>Murinae</taxon>
        <taxon>Rattus</taxon>
    </lineage>
</organism>
<proteinExistence type="evidence at protein level"/>
<gene>
    <name evidence="11" type="primary">Pafah1b2</name>
    <name type="synonym">Pafahb</name>
</gene>
<name>PA1B2_RAT</name>
<evidence type="ECO:0000250" key="1"/>
<evidence type="ECO:0000250" key="2">
    <source>
        <dbReference type="UniProtKB" id="P43034"/>
    </source>
</evidence>
<evidence type="ECO:0000250" key="3">
    <source>
        <dbReference type="UniProtKB" id="P68401"/>
    </source>
</evidence>
<evidence type="ECO:0000250" key="4">
    <source>
        <dbReference type="UniProtKB" id="P68402"/>
    </source>
</evidence>
<evidence type="ECO:0000250" key="5">
    <source>
        <dbReference type="UniProtKB" id="Q15102"/>
    </source>
</evidence>
<evidence type="ECO:0000250" key="6">
    <source>
        <dbReference type="UniProtKB" id="Q29460"/>
    </source>
</evidence>
<evidence type="ECO:0000250" key="7">
    <source>
        <dbReference type="UniProtKB" id="Q61206"/>
    </source>
</evidence>
<evidence type="ECO:0000269" key="8">
    <source>
    </source>
</evidence>
<evidence type="ECO:0000305" key="9"/>
<evidence type="ECO:0000305" key="10">
    <source>
    </source>
</evidence>
<evidence type="ECO:0000312" key="11">
    <source>
        <dbReference type="RGD" id="620332"/>
    </source>
</evidence>
<evidence type="ECO:0007744" key="12">
    <source>
    </source>
</evidence>
<accession>O35264</accession>
<protein>
    <recommendedName>
        <fullName evidence="9">Platelet-activating factor acetylhydrolase IB subunit alpha2</fullName>
        <ecNumber evidence="3">3.1.1.47</ecNumber>
    </recommendedName>
    <alternativeName>
        <fullName>PAF acetylhydrolase 30 kDa subunit</fullName>
        <shortName>PAF-AH 30 kDa subunit</shortName>
    </alternativeName>
    <alternativeName>
        <fullName>PAF-AH subunit beta</fullName>
        <shortName>PAFAH subunit beta</shortName>
    </alternativeName>
    <alternativeName>
        <fullName>Platelet-activating factor acetylhydrolase alpha 2 subunit</fullName>
        <shortName>PAF-AH alpha 2</shortName>
    </alternativeName>
</protein>
<keyword id="KW-0007">Acetylation</keyword>
<keyword id="KW-0963">Cytoplasm</keyword>
<keyword id="KW-0903">Direct protein sequencing</keyword>
<keyword id="KW-0378">Hydrolase</keyword>
<keyword id="KW-0442">Lipid degradation</keyword>
<keyword id="KW-0443">Lipid metabolism</keyword>
<keyword id="KW-0597">Phosphoprotein</keyword>
<keyword id="KW-1185">Reference proteome</keyword>
<sequence>MSQGDSNPAAIPHAAEDIQGDDRWMSQHNRFVLDCKDKEPDVLFVGDSMVQLMQQYEIWRELFSPLHALNFGIGGDTTRHVLWRLKNGELENIKPKVIVVWVGTNNHENTAEEVAGGIEAIVQLINTRQPQAKIIVLGLLPRGEKPNPLRQKNAKVNQLLKVSLPKLANVQLLDIDGGFVHSDGAISCHDMFDFLHLTGGGYAKICKPLHELIMQLLEETPEEKQTTIA</sequence>
<feature type="initiator methionine" description="Removed" evidence="4">
    <location>
        <position position="1"/>
    </location>
</feature>
<feature type="chain" id="PRO_0000058153" description="Platelet-activating factor acetylhydrolase IB subunit alpha2">
    <location>
        <begin position="2"/>
        <end position="229"/>
    </location>
</feature>
<feature type="active site" evidence="1">
    <location>
        <position position="48"/>
    </location>
</feature>
<feature type="active site" evidence="1">
    <location>
        <position position="193"/>
    </location>
</feature>
<feature type="active site" evidence="1">
    <location>
        <position position="196"/>
    </location>
</feature>
<feature type="modified residue" description="N-acetylserine" evidence="4">
    <location>
        <position position="2"/>
    </location>
</feature>
<feature type="modified residue" description="Phosphoserine" evidence="12">
    <location>
        <position position="2"/>
    </location>
</feature>
<feature type="modified residue" description="Phosphoserine" evidence="12">
    <location>
        <position position="64"/>
    </location>
</feature>
<feature type="modified residue" description="Phosphothreonine" evidence="12">
    <location>
        <position position="220"/>
    </location>
</feature>
<reference key="1">
    <citation type="journal article" date="1998" name="Biochim. Biophys. Acta">
        <title>Molecular cloning of cDNAs encoding alpha1, alpha2, and beta subunits of rat brain platelet-activating factor acetylhydrolase.</title>
        <authorList>
            <person name="Watanabe M."/>
            <person name="Aoki J."/>
            <person name="Manya H."/>
            <person name="Arai H."/>
            <person name="Inoue K."/>
        </authorList>
    </citation>
    <scope>NUCLEOTIDE SEQUENCE [MRNA]</scope>
    <source>
        <strain>Wistar</strain>
        <tissue>Brain</tissue>
    </source>
</reference>
<reference key="2">
    <citation type="journal article" date="2004" name="Genome Res.">
        <title>The status, quality, and expansion of the NIH full-length cDNA project: the Mammalian Gene Collection (MGC).</title>
        <authorList>
            <consortium name="The MGC Project Team"/>
        </authorList>
    </citation>
    <scope>NUCLEOTIDE SEQUENCE [LARGE SCALE MRNA]</scope>
    <source>
        <tissue>Kidney</tissue>
    </source>
</reference>
<reference key="3">
    <citation type="submission" date="2007-07" db="UniProtKB">
        <authorList>
            <person name="Lubec G."/>
            <person name="Chen W.-Q."/>
            <person name="Kang S.U."/>
        </authorList>
    </citation>
    <scope>PROTEIN SEQUENCE OF 61-79 AND 134-142</scope>
    <scope>IDENTIFICATION BY MASS SPECTROMETRY</scope>
    <source>
        <strain>Sprague-Dawley</strain>
        <tissue>Brain</tissue>
        <tissue>Hippocampus</tissue>
    </source>
</reference>
<reference key="4">
    <citation type="journal article" date="1998" name="J. Biol. Chem.">
        <title>Switching of platelet-activating factor acetylhydrolase catalytic subunits in developing rat brain.</title>
        <authorList>
            <person name="Manya H."/>
            <person name="Aoki J."/>
            <person name="Watanabe M."/>
            <person name="Adachi T."/>
            <person name="Asou H."/>
            <person name="Inoue Y."/>
            <person name="Arai H."/>
            <person name="Inoue K."/>
        </authorList>
    </citation>
    <scope>TISSUE SPECIFICITY</scope>
    <scope>FUNCTION</scope>
    <scope>CATALYTIC ACTIVITY</scope>
    <scope>SUBUNIT</scope>
    <scope>DEVELOPMENTAL STAGE</scope>
</reference>
<reference key="5">
    <citation type="journal article" date="2012" name="Nat. Commun.">
        <title>Quantitative maps of protein phosphorylation sites across 14 different rat organs and tissues.</title>
        <authorList>
            <person name="Lundby A."/>
            <person name="Secher A."/>
            <person name="Lage K."/>
            <person name="Nordsborg N.B."/>
            <person name="Dmytriyev A."/>
            <person name="Lundby C."/>
            <person name="Olsen J.V."/>
        </authorList>
    </citation>
    <scope>PHOSPHORYLATION [LARGE SCALE ANALYSIS] AT SER-2; SER-64 AND THR-220</scope>
    <scope>IDENTIFICATION BY MASS SPECTROMETRY [LARGE SCALE ANALYSIS]</scope>
</reference>
<dbReference type="EC" id="3.1.1.47" evidence="3"/>
<dbReference type="EMBL" id="AF016048">
    <property type="protein sequence ID" value="AAC27974.1"/>
    <property type="molecule type" value="mRNA"/>
</dbReference>
<dbReference type="EMBL" id="BC081714">
    <property type="protein sequence ID" value="AAH81714.1"/>
    <property type="molecule type" value="mRNA"/>
</dbReference>
<dbReference type="RefSeq" id="NP_071782.1">
    <property type="nucleotide sequence ID" value="NM_022387.3"/>
</dbReference>
<dbReference type="RefSeq" id="XP_006243020.1">
    <property type="nucleotide sequence ID" value="XM_006242958.5"/>
</dbReference>
<dbReference type="RefSeq" id="XP_038938009.1">
    <property type="nucleotide sequence ID" value="XM_039082081.2"/>
</dbReference>
<dbReference type="RefSeq" id="XP_038938010.1">
    <property type="nucleotide sequence ID" value="XM_039082082.2"/>
</dbReference>
<dbReference type="RefSeq" id="XP_063122144.1">
    <property type="nucleotide sequence ID" value="XM_063266074.1"/>
</dbReference>
<dbReference type="RefSeq" id="XP_063122145.1">
    <property type="nucleotide sequence ID" value="XM_063266075.1"/>
</dbReference>
<dbReference type="SMR" id="O35264"/>
<dbReference type="FunCoup" id="O35264">
    <property type="interactions" value="4274"/>
</dbReference>
<dbReference type="IntAct" id="O35264">
    <property type="interactions" value="2"/>
</dbReference>
<dbReference type="STRING" id="10116.ENSRNOP00000068672"/>
<dbReference type="iPTMnet" id="O35264"/>
<dbReference type="PhosphoSitePlus" id="O35264"/>
<dbReference type="SwissPalm" id="O35264"/>
<dbReference type="jPOST" id="O35264"/>
<dbReference type="PaxDb" id="10116-ENSRNOP00000024828"/>
<dbReference type="Ensembl" id="ENSRNOT00000111151.1">
    <property type="protein sequence ID" value="ENSRNOP00000091075.1"/>
    <property type="gene ID" value="ENSRNOG00000057102.2"/>
</dbReference>
<dbReference type="GeneID" id="64189"/>
<dbReference type="KEGG" id="rno:64189"/>
<dbReference type="UCSC" id="RGD:620332">
    <property type="organism name" value="rat"/>
</dbReference>
<dbReference type="AGR" id="RGD:620332"/>
<dbReference type="CTD" id="5049"/>
<dbReference type="RGD" id="620332">
    <property type="gene designation" value="Pafah1b2"/>
</dbReference>
<dbReference type="eggNOG" id="KOG1388">
    <property type="taxonomic scope" value="Eukaryota"/>
</dbReference>
<dbReference type="GeneTree" id="ENSGT00950000183199"/>
<dbReference type="HOGENOM" id="CLU_051989_2_0_1"/>
<dbReference type="InParanoid" id="O35264"/>
<dbReference type="OMA" id="AWNQYFA"/>
<dbReference type="OrthoDB" id="2844at9989"/>
<dbReference type="PhylomeDB" id="O35264"/>
<dbReference type="TreeFam" id="TF323955"/>
<dbReference type="BRENDA" id="3.1.1.47">
    <property type="organism ID" value="5301"/>
</dbReference>
<dbReference type="Reactome" id="R-RNO-6798695">
    <property type="pathway name" value="Neutrophil degranulation"/>
</dbReference>
<dbReference type="Reactome" id="R-RNO-6811436">
    <property type="pathway name" value="COPI-independent Golgi-to-ER retrograde traffic"/>
</dbReference>
<dbReference type="PRO" id="PR:O35264"/>
<dbReference type="Proteomes" id="UP000002494">
    <property type="component" value="Chromosome 8"/>
</dbReference>
<dbReference type="Bgee" id="ENSRNOG00000057102">
    <property type="expression patterns" value="Expressed in cerebellum and 19 other cell types or tissues"/>
</dbReference>
<dbReference type="GO" id="GO:0008247">
    <property type="term" value="C:1-alkyl-2-acetylglycerophosphocholine esterase complex"/>
    <property type="evidence" value="ECO:0000314"/>
    <property type="project" value="UniProtKB"/>
</dbReference>
<dbReference type="GO" id="GO:0005737">
    <property type="term" value="C:cytoplasm"/>
    <property type="evidence" value="ECO:0000266"/>
    <property type="project" value="RGD"/>
</dbReference>
<dbReference type="GO" id="GO:0005829">
    <property type="term" value="C:cytosol"/>
    <property type="evidence" value="ECO:0007669"/>
    <property type="project" value="Ensembl"/>
</dbReference>
<dbReference type="GO" id="GO:0001650">
    <property type="term" value="C:fibrillar center"/>
    <property type="evidence" value="ECO:0007669"/>
    <property type="project" value="Ensembl"/>
</dbReference>
<dbReference type="GO" id="GO:0005886">
    <property type="term" value="C:plasma membrane"/>
    <property type="evidence" value="ECO:0007669"/>
    <property type="project" value="Ensembl"/>
</dbReference>
<dbReference type="GO" id="GO:0003847">
    <property type="term" value="F:1-alkyl-2-acetylglycerophosphocholine esterase activity"/>
    <property type="evidence" value="ECO:0000314"/>
    <property type="project" value="UniProtKB"/>
</dbReference>
<dbReference type="GO" id="GO:0042802">
    <property type="term" value="F:identical protein binding"/>
    <property type="evidence" value="ECO:0000353"/>
    <property type="project" value="RGD"/>
</dbReference>
<dbReference type="GO" id="GO:0047179">
    <property type="term" value="F:platelet-activating factor acetyltransferase activity"/>
    <property type="evidence" value="ECO:0000314"/>
    <property type="project" value="RGD"/>
</dbReference>
<dbReference type="GO" id="GO:0046982">
    <property type="term" value="F:protein heterodimerization activity"/>
    <property type="evidence" value="ECO:0000250"/>
    <property type="project" value="UniProtKB"/>
</dbReference>
<dbReference type="GO" id="GO:0042803">
    <property type="term" value="F:protein homodimerization activity"/>
    <property type="evidence" value="ECO:0000250"/>
    <property type="project" value="UniProtKB"/>
</dbReference>
<dbReference type="GO" id="GO:0044877">
    <property type="term" value="F:protein-containing complex binding"/>
    <property type="evidence" value="ECO:0000353"/>
    <property type="project" value="RGD"/>
</dbReference>
<dbReference type="GO" id="GO:0016042">
    <property type="term" value="P:lipid catabolic process"/>
    <property type="evidence" value="ECO:0007669"/>
    <property type="project" value="UniProtKB-KW"/>
</dbReference>
<dbReference type="GO" id="GO:0016239">
    <property type="term" value="P:positive regulation of macroautophagy"/>
    <property type="evidence" value="ECO:0000266"/>
    <property type="project" value="RGD"/>
</dbReference>
<dbReference type="GO" id="GO:0007283">
    <property type="term" value="P:spermatogenesis"/>
    <property type="evidence" value="ECO:0000250"/>
    <property type="project" value="UniProtKB"/>
</dbReference>
<dbReference type="CDD" id="cd01820">
    <property type="entry name" value="PAF_acetylesterase_like"/>
    <property type="match status" value="1"/>
</dbReference>
<dbReference type="FunFam" id="3.40.50.1110:FF:000004">
    <property type="entry name" value="Platelet-activating factor acetylhydrolase IB subunit beta"/>
    <property type="match status" value="1"/>
</dbReference>
<dbReference type="Gene3D" id="3.40.50.1110">
    <property type="entry name" value="SGNH hydrolase"/>
    <property type="match status" value="1"/>
</dbReference>
<dbReference type="InterPro" id="IPR013830">
    <property type="entry name" value="SGNH_hydro"/>
</dbReference>
<dbReference type="InterPro" id="IPR036514">
    <property type="entry name" value="SGNH_hydro_sf"/>
</dbReference>
<dbReference type="PANTHER" id="PTHR11852">
    <property type="entry name" value="PLATELET-ACTIVATING FACTOR ACETYLHYDROLASE"/>
    <property type="match status" value="1"/>
</dbReference>
<dbReference type="PANTHER" id="PTHR11852:SF1">
    <property type="entry name" value="PLATELET-ACTIVATING FACTOR ACETYLHYDROLASE IB SUBUNIT ALPHA2"/>
    <property type="match status" value="1"/>
</dbReference>
<dbReference type="Pfam" id="PF13472">
    <property type="entry name" value="Lipase_GDSL_2"/>
    <property type="match status" value="1"/>
</dbReference>
<dbReference type="SUPFAM" id="SSF52266">
    <property type="entry name" value="SGNH hydrolase"/>
    <property type="match status" value="1"/>
</dbReference>